<name>THIE2_STRR6</name>
<evidence type="ECO:0000255" key="1">
    <source>
        <dbReference type="HAMAP-Rule" id="MF_00097"/>
    </source>
</evidence>
<comment type="function">
    <text evidence="1">Condenses 4-methyl-5-(beta-hydroxyethyl)thiazole monophosphate (THZ-P) and 2-methyl-4-amino-5-hydroxymethyl pyrimidine pyrophosphate (HMP-PP) to form thiamine monophosphate (TMP).</text>
</comment>
<comment type="catalytic activity">
    <reaction evidence="1">
        <text>2-[(2R,5Z)-2-carboxy-4-methylthiazol-5(2H)-ylidene]ethyl phosphate + 4-amino-2-methyl-5-(diphosphooxymethyl)pyrimidine + 2 H(+) = thiamine phosphate + CO2 + diphosphate</text>
        <dbReference type="Rhea" id="RHEA:47844"/>
        <dbReference type="ChEBI" id="CHEBI:15378"/>
        <dbReference type="ChEBI" id="CHEBI:16526"/>
        <dbReference type="ChEBI" id="CHEBI:33019"/>
        <dbReference type="ChEBI" id="CHEBI:37575"/>
        <dbReference type="ChEBI" id="CHEBI:57841"/>
        <dbReference type="ChEBI" id="CHEBI:62899"/>
        <dbReference type="EC" id="2.5.1.3"/>
    </reaction>
</comment>
<comment type="catalytic activity">
    <reaction evidence="1">
        <text>2-(2-carboxy-4-methylthiazol-5-yl)ethyl phosphate + 4-amino-2-methyl-5-(diphosphooxymethyl)pyrimidine + 2 H(+) = thiamine phosphate + CO2 + diphosphate</text>
        <dbReference type="Rhea" id="RHEA:47848"/>
        <dbReference type="ChEBI" id="CHEBI:15378"/>
        <dbReference type="ChEBI" id="CHEBI:16526"/>
        <dbReference type="ChEBI" id="CHEBI:33019"/>
        <dbReference type="ChEBI" id="CHEBI:37575"/>
        <dbReference type="ChEBI" id="CHEBI:57841"/>
        <dbReference type="ChEBI" id="CHEBI:62890"/>
        <dbReference type="EC" id="2.5.1.3"/>
    </reaction>
</comment>
<comment type="catalytic activity">
    <reaction evidence="1">
        <text>4-methyl-5-(2-phosphooxyethyl)-thiazole + 4-amino-2-methyl-5-(diphosphooxymethyl)pyrimidine + H(+) = thiamine phosphate + diphosphate</text>
        <dbReference type="Rhea" id="RHEA:22328"/>
        <dbReference type="ChEBI" id="CHEBI:15378"/>
        <dbReference type="ChEBI" id="CHEBI:33019"/>
        <dbReference type="ChEBI" id="CHEBI:37575"/>
        <dbReference type="ChEBI" id="CHEBI:57841"/>
        <dbReference type="ChEBI" id="CHEBI:58296"/>
        <dbReference type="EC" id="2.5.1.3"/>
    </reaction>
</comment>
<comment type="cofactor">
    <cofactor evidence="1">
        <name>Mg(2+)</name>
        <dbReference type="ChEBI" id="CHEBI:18420"/>
    </cofactor>
    <text evidence="1">Binds 1 Mg(2+) ion per subunit.</text>
</comment>
<comment type="pathway">
    <text evidence="1">Cofactor biosynthesis; thiamine diphosphate biosynthesis; thiamine phosphate from 4-amino-2-methyl-5-diphosphomethylpyrimidine and 4-methyl-5-(2-phosphoethyl)-thiazole: step 1/1.</text>
</comment>
<comment type="similarity">
    <text evidence="1">Belongs to the thiamine-phosphate synthase family.</text>
</comment>
<organism>
    <name type="scientific">Streptococcus pneumoniae (strain ATCC BAA-255 / R6)</name>
    <dbReference type="NCBI Taxonomy" id="171101"/>
    <lineage>
        <taxon>Bacteria</taxon>
        <taxon>Bacillati</taxon>
        <taxon>Bacillota</taxon>
        <taxon>Bacilli</taxon>
        <taxon>Lactobacillales</taxon>
        <taxon>Streptococcaceae</taxon>
        <taxon>Streptococcus</taxon>
    </lineage>
</organism>
<accession>P66921</accession>
<accession>Q97RR8</accession>
<gene>
    <name evidence="1" type="primary">thiE2</name>
    <name type="ordered locus">spr0637</name>
</gene>
<reference key="1">
    <citation type="journal article" date="2001" name="J. Bacteriol.">
        <title>Genome of the bacterium Streptococcus pneumoniae strain R6.</title>
        <authorList>
            <person name="Hoskins J."/>
            <person name="Alborn W.E. Jr."/>
            <person name="Arnold J."/>
            <person name="Blaszczak L.C."/>
            <person name="Burgett S."/>
            <person name="DeHoff B.S."/>
            <person name="Estrem S.T."/>
            <person name="Fritz L."/>
            <person name="Fu D.-J."/>
            <person name="Fuller W."/>
            <person name="Geringer C."/>
            <person name="Gilmour R."/>
            <person name="Glass J.S."/>
            <person name="Khoja H."/>
            <person name="Kraft A.R."/>
            <person name="Lagace R.E."/>
            <person name="LeBlanc D.J."/>
            <person name="Lee L.N."/>
            <person name="Lefkowitz E.J."/>
            <person name="Lu J."/>
            <person name="Matsushima P."/>
            <person name="McAhren S.M."/>
            <person name="McHenney M."/>
            <person name="McLeaster K."/>
            <person name="Mundy C.W."/>
            <person name="Nicas T.I."/>
            <person name="Norris F.H."/>
            <person name="O'Gara M."/>
            <person name="Peery R.B."/>
            <person name="Robertson G.T."/>
            <person name="Rockey P."/>
            <person name="Sun P.-M."/>
            <person name="Winkler M.E."/>
            <person name="Yang Y."/>
            <person name="Young-Bellido M."/>
            <person name="Zhao G."/>
            <person name="Zook C.A."/>
            <person name="Baltz R.H."/>
            <person name="Jaskunas S.R."/>
            <person name="Rosteck P.R. Jr."/>
            <person name="Skatrud P.L."/>
            <person name="Glass J.I."/>
        </authorList>
    </citation>
    <scope>NUCLEOTIDE SEQUENCE [LARGE SCALE GENOMIC DNA]</scope>
    <source>
        <strain>ATCC BAA-255 / R6</strain>
    </source>
</reference>
<dbReference type="EC" id="2.5.1.3" evidence="1"/>
<dbReference type="EMBL" id="AE007317">
    <property type="protein sequence ID" value="AAK99441.1"/>
    <property type="molecule type" value="Genomic_DNA"/>
</dbReference>
<dbReference type="PIR" id="E97951">
    <property type="entry name" value="E97951"/>
</dbReference>
<dbReference type="RefSeq" id="NP_358231.1">
    <property type="nucleotide sequence ID" value="NC_003098.1"/>
</dbReference>
<dbReference type="RefSeq" id="WP_001078223.1">
    <property type="nucleotide sequence ID" value="NC_003098.1"/>
</dbReference>
<dbReference type="SMR" id="P66921"/>
<dbReference type="STRING" id="171101.spr0637"/>
<dbReference type="KEGG" id="spr:spr0637"/>
<dbReference type="PATRIC" id="fig|171101.6.peg.708"/>
<dbReference type="eggNOG" id="COG0352">
    <property type="taxonomic scope" value="Bacteria"/>
</dbReference>
<dbReference type="HOGENOM" id="CLU_018272_3_2_9"/>
<dbReference type="UniPathway" id="UPA00060">
    <property type="reaction ID" value="UER00141"/>
</dbReference>
<dbReference type="Proteomes" id="UP000000586">
    <property type="component" value="Chromosome"/>
</dbReference>
<dbReference type="GO" id="GO:0005737">
    <property type="term" value="C:cytoplasm"/>
    <property type="evidence" value="ECO:0000318"/>
    <property type="project" value="GO_Central"/>
</dbReference>
<dbReference type="GO" id="GO:0000287">
    <property type="term" value="F:magnesium ion binding"/>
    <property type="evidence" value="ECO:0007669"/>
    <property type="project" value="UniProtKB-UniRule"/>
</dbReference>
<dbReference type="GO" id="GO:0004789">
    <property type="term" value="F:thiamine-phosphate diphosphorylase activity"/>
    <property type="evidence" value="ECO:0000318"/>
    <property type="project" value="GO_Central"/>
</dbReference>
<dbReference type="GO" id="GO:0009228">
    <property type="term" value="P:thiamine biosynthetic process"/>
    <property type="evidence" value="ECO:0000318"/>
    <property type="project" value="GO_Central"/>
</dbReference>
<dbReference type="GO" id="GO:0009229">
    <property type="term" value="P:thiamine diphosphate biosynthetic process"/>
    <property type="evidence" value="ECO:0007669"/>
    <property type="project" value="UniProtKB-UniRule"/>
</dbReference>
<dbReference type="CDD" id="cd00564">
    <property type="entry name" value="TMP_TenI"/>
    <property type="match status" value="1"/>
</dbReference>
<dbReference type="FunFam" id="3.20.20.70:FF:000096">
    <property type="entry name" value="Thiamine-phosphate synthase"/>
    <property type="match status" value="1"/>
</dbReference>
<dbReference type="Gene3D" id="3.20.20.70">
    <property type="entry name" value="Aldolase class I"/>
    <property type="match status" value="1"/>
</dbReference>
<dbReference type="HAMAP" id="MF_00097">
    <property type="entry name" value="TMP_synthase"/>
    <property type="match status" value="1"/>
</dbReference>
<dbReference type="InterPro" id="IPR013785">
    <property type="entry name" value="Aldolase_TIM"/>
</dbReference>
<dbReference type="InterPro" id="IPR036206">
    <property type="entry name" value="ThiamineP_synth_sf"/>
</dbReference>
<dbReference type="InterPro" id="IPR022998">
    <property type="entry name" value="ThiamineP_synth_TenI"/>
</dbReference>
<dbReference type="InterPro" id="IPR034291">
    <property type="entry name" value="TMP_synthase"/>
</dbReference>
<dbReference type="NCBIfam" id="TIGR00693">
    <property type="entry name" value="thiE"/>
    <property type="match status" value="1"/>
</dbReference>
<dbReference type="PANTHER" id="PTHR20857">
    <property type="entry name" value="THIAMINE-PHOSPHATE PYROPHOSPHORYLASE"/>
    <property type="match status" value="1"/>
</dbReference>
<dbReference type="PANTHER" id="PTHR20857:SF15">
    <property type="entry name" value="THIAMINE-PHOSPHATE SYNTHASE"/>
    <property type="match status" value="1"/>
</dbReference>
<dbReference type="Pfam" id="PF02581">
    <property type="entry name" value="TMP-TENI"/>
    <property type="match status" value="1"/>
</dbReference>
<dbReference type="SUPFAM" id="SSF51391">
    <property type="entry name" value="Thiamin phosphate synthase"/>
    <property type="match status" value="1"/>
</dbReference>
<feature type="chain" id="PRO_0000157058" description="Thiamine-phosphate synthase 2">
    <location>
        <begin position="1"/>
        <end position="210"/>
    </location>
</feature>
<feature type="binding site" evidence="1">
    <location>
        <begin position="38"/>
        <end position="42"/>
    </location>
    <ligand>
        <name>4-amino-2-methyl-5-(diphosphooxymethyl)pyrimidine</name>
        <dbReference type="ChEBI" id="CHEBI:57841"/>
    </ligand>
</feature>
<feature type="binding site" evidence="1">
    <location>
        <position position="70"/>
    </location>
    <ligand>
        <name>4-amino-2-methyl-5-(diphosphooxymethyl)pyrimidine</name>
        <dbReference type="ChEBI" id="CHEBI:57841"/>
    </ligand>
</feature>
<feature type="binding site" evidence="1">
    <location>
        <position position="71"/>
    </location>
    <ligand>
        <name>Mg(2+)</name>
        <dbReference type="ChEBI" id="CHEBI:18420"/>
    </ligand>
</feature>
<feature type="binding site" evidence="1">
    <location>
        <position position="90"/>
    </location>
    <ligand>
        <name>Mg(2+)</name>
        <dbReference type="ChEBI" id="CHEBI:18420"/>
    </ligand>
</feature>
<feature type="binding site" evidence="1">
    <location>
        <position position="109"/>
    </location>
    <ligand>
        <name>4-amino-2-methyl-5-(diphosphooxymethyl)pyrimidine</name>
        <dbReference type="ChEBI" id="CHEBI:57841"/>
    </ligand>
</feature>
<feature type="binding site" evidence="1">
    <location>
        <begin position="135"/>
        <end position="137"/>
    </location>
    <ligand>
        <name>2-[(2R,5Z)-2-carboxy-4-methylthiazol-5(2H)-ylidene]ethyl phosphate</name>
        <dbReference type="ChEBI" id="CHEBI:62899"/>
    </ligand>
</feature>
<feature type="binding site" evidence="1">
    <location>
        <position position="138"/>
    </location>
    <ligand>
        <name>4-amino-2-methyl-5-(diphosphooxymethyl)pyrimidine</name>
        <dbReference type="ChEBI" id="CHEBI:57841"/>
    </ligand>
</feature>
<feature type="binding site" evidence="1">
    <location>
        <position position="165"/>
    </location>
    <ligand>
        <name>2-[(2R,5Z)-2-carboxy-4-methylthiazol-5(2H)-ylidene]ethyl phosphate</name>
        <dbReference type="ChEBI" id="CHEBI:62899"/>
    </ligand>
</feature>
<protein>
    <recommendedName>
        <fullName evidence="1">Thiamine-phosphate synthase 2</fullName>
        <shortName evidence="1">TP synthase 2</shortName>
        <shortName evidence="1">TPS 2</shortName>
        <ecNumber evidence="1">2.5.1.3</ecNumber>
    </recommendedName>
    <alternativeName>
        <fullName evidence="1">Thiamine-phosphate pyrophosphorylase 2</fullName>
        <shortName evidence="1">TMP pyrophosphorylase 2</shortName>
        <shortName evidence="1">TMP-PPase 2</shortName>
    </alternativeName>
</protein>
<keyword id="KW-0460">Magnesium</keyword>
<keyword id="KW-0479">Metal-binding</keyword>
<keyword id="KW-1185">Reference proteome</keyword>
<keyword id="KW-0784">Thiamine biosynthesis</keyword>
<keyword id="KW-0808">Transferase</keyword>
<proteinExistence type="inferred from homology"/>
<sequence length="210" mass="22770">MNREALRLYLVTNRYQDSVESFLAKVETACRSGVTIVQLREKNLTTNQYYQLAKQVKEITDAYQVPLIIDDRLDVCLAVDAAGLHIGDDELPVSVARKVLGPEKILGVTAKTVKRALEAEKSGADYLGTGAIFPTTTKENAPITLISTLKTICQTVAIPVVAIGGLTSENIDQLMGTGIAGVAVVRDLMQAEDIEAKTQAFLKKLHNILS</sequence>